<organism>
    <name type="scientific">Rickettsia africae (strain ESF-5)</name>
    <dbReference type="NCBI Taxonomy" id="347255"/>
    <lineage>
        <taxon>Bacteria</taxon>
        <taxon>Pseudomonadati</taxon>
        <taxon>Pseudomonadota</taxon>
        <taxon>Alphaproteobacteria</taxon>
        <taxon>Rickettsiales</taxon>
        <taxon>Rickettsiaceae</taxon>
        <taxon>Rickettsieae</taxon>
        <taxon>Rickettsia</taxon>
        <taxon>spotted fever group</taxon>
    </lineage>
</organism>
<name>CTAA_RICAE</name>
<evidence type="ECO:0000255" key="1">
    <source>
        <dbReference type="HAMAP-Rule" id="MF_01665"/>
    </source>
</evidence>
<protein>
    <recommendedName>
        <fullName evidence="1">Heme A synthase</fullName>
        <shortName evidence="1">HAS</shortName>
        <ecNumber evidence="1">1.17.99.9</ecNumber>
    </recommendedName>
    <alternativeName>
        <fullName evidence="1">Cytochrome aa3-controlling protein</fullName>
    </alternativeName>
</protein>
<dbReference type="EC" id="1.17.99.9" evidence="1"/>
<dbReference type="EMBL" id="CP001612">
    <property type="protein sequence ID" value="ACP53265.1"/>
    <property type="molecule type" value="Genomic_DNA"/>
</dbReference>
<dbReference type="RefSeq" id="WP_012719519.1">
    <property type="nucleotide sequence ID" value="NC_012633.1"/>
</dbReference>
<dbReference type="SMR" id="C3PMV5"/>
<dbReference type="KEGG" id="raf:RAF_ORF0319"/>
<dbReference type="HOGENOM" id="CLU_017627_0_0_5"/>
<dbReference type="UniPathway" id="UPA00269">
    <property type="reaction ID" value="UER00713"/>
</dbReference>
<dbReference type="Proteomes" id="UP000002305">
    <property type="component" value="Chromosome"/>
</dbReference>
<dbReference type="GO" id="GO:0005886">
    <property type="term" value="C:plasma membrane"/>
    <property type="evidence" value="ECO:0007669"/>
    <property type="project" value="UniProtKB-SubCell"/>
</dbReference>
<dbReference type="GO" id="GO:0046872">
    <property type="term" value="F:metal ion binding"/>
    <property type="evidence" value="ECO:0007669"/>
    <property type="project" value="UniProtKB-KW"/>
</dbReference>
<dbReference type="GO" id="GO:0016653">
    <property type="term" value="F:oxidoreductase activity, acting on NAD(P)H, heme protein as acceptor"/>
    <property type="evidence" value="ECO:0007669"/>
    <property type="project" value="InterPro"/>
</dbReference>
<dbReference type="GO" id="GO:0006784">
    <property type="term" value="P:heme A biosynthetic process"/>
    <property type="evidence" value="ECO:0007669"/>
    <property type="project" value="UniProtKB-UniRule"/>
</dbReference>
<dbReference type="HAMAP" id="MF_01665">
    <property type="entry name" value="HemeA_synth_type2"/>
    <property type="match status" value="1"/>
</dbReference>
<dbReference type="InterPro" id="IPR003780">
    <property type="entry name" value="COX15/CtaA_fam"/>
</dbReference>
<dbReference type="InterPro" id="IPR023754">
    <property type="entry name" value="HemeA_Synthase_type2"/>
</dbReference>
<dbReference type="PANTHER" id="PTHR23289">
    <property type="entry name" value="CYTOCHROME C OXIDASE ASSEMBLY PROTEIN COX15"/>
    <property type="match status" value="1"/>
</dbReference>
<dbReference type="PANTHER" id="PTHR23289:SF2">
    <property type="entry name" value="CYTOCHROME C OXIDASE ASSEMBLY PROTEIN COX15 HOMOLOG"/>
    <property type="match status" value="1"/>
</dbReference>
<dbReference type="Pfam" id="PF02628">
    <property type="entry name" value="COX15-CtaA"/>
    <property type="match status" value="1"/>
</dbReference>
<reference key="1">
    <citation type="journal article" date="2009" name="BMC Genomics">
        <title>Analysis of the Rickettsia africae genome reveals that virulence acquisition in Rickettsia species may be explained by genome reduction.</title>
        <authorList>
            <person name="Fournier P.-E."/>
            <person name="El Karkouri K."/>
            <person name="Leroy Q."/>
            <person name="Robert C."/>
            <person name="Giumelli B."/>
            <person name="Renesto P."/>
            <person name="Socolovschi C."/>
            <person name="Parola P."/>
            <person name="Audic S."/>
            <person name="Raoult D."/>
        </authorList>
    </citation>
    <scope>NUCLEOTIDE SEQUENCE [LARGE SCALE GENOMIC DNA]</scope>
    <source>
        <strain>ESF-5</strain>
    </source>
</reference>
<gene>
    <name evidence="1" type="primary">ctaA</name>
    <name type="ordered locus">RAF_ORF0319</name>
</gene>
<comment type="function">
    <text evidence="1">Catalyzes the conversion of heme O to heme A by two successive hydroxylations of the methyl group at C8. The first hydroxylation forms heme I, the second hydroxylation results in an unstable dihydroxymethyl group, which spontaneously dehydrates, resulting in the formyl group of heme A.</text>
</comment>
<comment type="catalytic activity">
    <reaction evidence="1">
        <text>Fe(II)-heme o + 2 A + H2O = Fe(II)-heme a + 2 AH2</text>
        <dbReference type="Rhea" id="RHEA:63388"/>
        <dbReference type="ChEBI" id="CHEBI:13193"/>
        <dbReference type="ChEBI" id="CHEBI:15377"/>
        <dbReference type="ChEBI" id="CHEBI:17499"/>
        <dbReference type="ChEBI" id="CHEBI:60530"/>
        <dbReference type="ChEBI" id="CHEBI:61715"/>
        <dbReference type="EC" id="1.17.99.9"/>
    </reaction>
    <physiologicalReaction direction="left-to-right" evidence="1">
        <dbReference type="Rhea" id="RHEA:63389"/>
    </physiologicalReaction>
</comment>
<comment type="cofactor">
    <cofactor evidence="1">
        <name>heme b</name>
        <dbReference type="ChEBI" id="CHEBI:60344"/>
    </cofactor>
</comment>
<comment type="pathway">
    <text evidence="1">Porphyrin-containing compound metabolism; heme A biosynthesis; heme A from heme O: step 1/1.</text>
</comment>
<comment type="subunit">
    <text evidence="1">Interacts with CtaB.</text>
</comment>
<comment type="subcellular location">
    <subcellularLocation>
        <location evidence="1">Cell membrane</location>
        <topology evidence="1">Multi-pass membrane protein</topology>
    </subcellularLocation>
</comment>
<comment type="similarity">
    <text evidence="1">Belongs to the COX15/CtaA family. Type 2 subfamily.</text>
</comment>
<feature type="chain" id="PRO_1000215877" description="Heme A synthase">
    <location>
        <begin position="1"/>
        <end position="337"/>
    </location>
</feature>
<feature type="transmembrane region" description="Helical" evidence="1">
    <location>
        <begin position="6"/>
        <end position="26"/>
    </location>
</feature>
<feature type="transmembrane region" description="Helical" evidence="1">
    <location>
        <begin position="87"/>
        <end position="107"/>
    </location>
</feature>
<feature type="transmembrane region" description="Helical" evidence="1">
    <location>
        <begin position="119"/>
        <end position="139"/>
    </location>
</feature>
<feature type="transmembrane region" description="Helical" evidence="1">
    <location>
        <begin position="154"/>
        <end position="174"/>
    </location>
</feature>
<feature type="transmembrane region" description="Helical" evidence="1">
    <location>
        <begin position="192"/>
        <end position="212"/>
    </location>
</feature>
<feature type="transmembrane region" description="Helical" evidence="1">
    <location>
        <begin position="258"/>
        <end position="278"/>
    </location>
</feature>
<feature type="transmembrane region" description="Helical" evidence="1">
    <location>
        <begin position="285"/>
        <end position="305"/>
    </location>
</feature>
<feature type="transmembrane region" description="Helical" evidence="1">
    <location>
        <begin position="308"/>
        <end position="328"/>
    </location>
</feature>
<feature type="binding site" description="axial binding residue" evidence="1">
    <location>
        <position position="256"/>
    </location>
    <ligand>
        <name>heme</name>
        <dbReference type="ChEBI" id="CHEBI:30413"/>
    </ligand>
    <ligandPart>
        <name>Fe</name>
        <dbReference type="ChEBI" id="CHEBI:18248"/>
    </ligandPart>
</feature>
<feature type="binding site" description="axial binding residue" evidence="1">
    <location>
        <position position="316"/>
    </location>
    <ligand>
        <name>heme</name>
        <dbReference type="ChEBI" id="CHEBI:30413"/>
    </ligand>
    <ligandPart>
        <name>Fe</name>
        <dbReference type="ChEBI" id="CHEBI:18248"/>
    </ligandPart>
</feature>
<accession>C3PMV5</accession>
<keyword id="KW-1003">Cell membrane</keyword>
<keyword id="KW-0350">Heme biosynthesis</keyword>
<keyword id="KW-0408">Iron</keyword>
<keyword id="KW-0472">Membrane</keyword>
<keyword id="KW-0479">Metal-binding</keyword>
<keyword id="KW-0560">Oxidoreductase</keyword>
<keyword id="KW-0812">Transmembrane</keyword>
<keyword id="KW-1133">Transmembrane helix</keyword>
<proteinExistence type="inferred from homology"/>
<sequence length="337" mass="38924">MQKSLITKWLCISCIMVIATIVIGGITRLTGSGLSIVEWRPVTGILPPFSFESWQSEFAKYKAFPEYNSVNYGITLSQFKFIYLLEFIHRLLGRITALIYIVPLIYFYFKDVIKNRDMLPYIIALLLFCIQGFIGWYMVKSGLLNSPYVSHFRLAFHLIIAVIIYHILFYQLIKNRCDILLILSQTDFKLPLIFSGIAITVVYVQIFLGALVAGLDAGLIYNSFPLMDDRFIPMEIKDNFFDLKNWYDPVFIQFIHRLVGYSVFLVVVVLIICLLKIEHPKLNKIAYFLMIVLFMQVSTGIITLLYSVPIIIASIHQLFAIILLSIIIWCYFLIKSS</sequence>